<sequence>SGSCTLRTCWKKMPHFREVGDRLLERFNGAFKVMAGNDGKSVVPVGHNIKPPDKRDLIYSADSPDFCMANRKTGAPGTKGRLCNSTAMDMGGCDLLCCGRGHREETMVLEENCLCRF</sequence>
<evidence type="ECO:0000250" key="1">
    <source>
        <dbReference type="UniProtKB" id="P27467"/>
    </source>
</evidence>
<evidence type="ECO:0000250" key="2">
    <source>
        <dbReference type="UniProtKB" id="P28026"/>
    </source>
</evidence>
<evidence type="ECO:0000250" key="3">
    <source>
        <dbReference type="UniProtKB" id="P56704"/>
    </source>
</evidence>
<evidence type="ECO:0000255" key="4"/>
<evidence type="ECO:0000305" key="5"/>
<accession>P28137</accession>
<reference key="1">
    <citation type="journal article" date="1992" name="Proc. Natl. Acad. Sci. U.S.A.">
        <title>Diversification of the Wnt gene family on the ancestral lineage of vertebrates.</title>
        <authorList>
            <person name="Sidow A."/>
        </authorList>
    </citation>
    <scope>NUCLEOTIDE SEQUENCE [GENOMIC DNA]</scope>
</reference>
<dbReference type="EMBL" id="M91294">
    <property type="protein sequence ID" value="AAA49462.1"/>
    <property type="molecule type" value="Genomic_DNA"/>
</dbReference>
<dbReference type="SMR" id="P28137"/>
<dbReference type="GlyCosmos" id="P28137">
    <property type="glycosylation" value="1 site, No reported glycans"/>
</dbReference>
<dbReference type="GO" id="GO:0005615">
    <property type="term" value="C:extracellular space"/>
    <property type="evidence" value="ECO:0007669"/>
    <property type="project" value="TreeGrafter"/>
</dbReference>
<dbReference type="GO" id="GO:0005125">
    <property type="term" value="F:cytokine activity"/>
    <property type="evidence" value="ECO:0007669"/>
    <property type="project" value="TreeGrafter"/>
</dbReference>
<dbReference type="GO" id="GO:0005109">
    <property type="term" value="F:frizzled binding"/>
    <property type="evidence" value="ECO:0007669"/>
    <property type="project" value="TreeGrafter"/>
</dbReference>
<dbReference type="GO" id="GO:0060070">
    <property type="term" value="P:canonical Wnt signaling pathway"/>
    <property type="evidence" value="ECO:0007669"/>
    <property type="project" value="TreeGrafter"/>
</dbReference>
<dbReference type="GO" id="GO:0045165">
    <property type="term" value="P:cell fate commitment"/>
    <property type="evidence" value="ECO:0007669"/>
    <property type="project" value="TreeGrafter"/>
</dbReference>
<dbReference type="GO" id="GO:0030182">
    <property type="term" value="P:neuron differentiation"/>
    <property type="evidence" value="ECO:0007669"/>
    <property type="project" value="TreeGrafter"/>
</dbReference>
<dbReference type="Gene3D" id="3.30.2460.20">
    <property type="match status" value="1"/>
</dbReference>
<dbReference type="InterPro" id="IPR005817">
    <property type="entry name" value="Wnt"/>
</dbReference>
<dbReference type="InterPro" id="IPR043158">
    <property type="entry name" value="Wnt_C"/>
</dbReference>
<dbReference type="PANTHER" id="PTHR12027:SF72">
    <property type="entry name" value="PROTEIN WNT-6"/>
    <property type="match status" value="1"/>
</dbReference>
<dbReference type="PANTHER" id="PTHR12027">
    <property type="entry name" value="WNT RELATED"/>
    <property type="match status" value="1"/>
</dbReference>
<dbReference type="Pfam" id="PF00110">
    <property type="entry name" value="wnt"/>
    <property type="match status" value="1"/>
</dbReference>
<dbReference type="SMART" id="SM00097">
    <property type="entry name" value="WNT1"/>
    <property type="match status" value="1"/>
</dbReference>
<organism>
    <name type="scientific">Plethodon jordani</name>
    <name type="common">Red-cheeked salamander</name>
    <dbReference type="NCBI Taxonomy" id="8336"/>
    <lineage>
        <taxon>Eukaryota</taxon>
        <taxon>Metazoa</taxon>
        <taxon>Chordata</taxon>
        <taxon>Craniata</taxon>
        <taxon>Vertebrata</taxon>
        <taxon>Euteleostomi</taxon>
        <taxon>Amphibia</taxon>
        <taxon>Batrachia</taxon>
        <taxon>Caudata</taxon>
        <taxon>Salamandroidea</taxon>
        <taxon>Plethodontidae</taxon>
        <taxon>Plethodontinae</taxon>
        <taxon>Plethodon</taxon>
    </lineage>
</organism>
<keyword id="KW-0217">Developmental protein</keyword>
<keyword id="KW-1015">Disulfide bond</keyword>
<keyword id="KW-0272">Extracellular matrix</keyword>
<keyword id="KW-0325">Glycoprotein</keyword>
<keyword id="KW-0449">Lipoprotein</keyword>
<keyword id="KW-0964">Secreted</keyword>
<keyword id="KW-0879">Wnt signaling pathway</keyword>
<comment type="function">
    <text>Ligand for members of the frizzled family of seven transmembrane receptors. Probable developmental protein. May be a signaling molecule which affects the development of discrete regions of tissues. Is likely to signal over only few cell diameters.</text>
</comment>
<comment type="subcellular location">
    <subcellularLocation>
        <location>Secreted</location>
        <location>Extracellular space</location>
        <location>Extracellular matrix</location>
    </subcellularLocation>
</comment>
<comment type="PTM">
    <text evidence="1 3">Palmitoleoylation is required for efficient binding to frizzled receptors. Depalmitoleoylation leads to Wnt signaling pathway inhibition.</text>
</comment>
<comment type="similarity">
    <text evidence="5">Belongs to the Wnt family.</text>
</comment>
<gene>
    <name type="primary">WNT-6</name>
</gene>
<name>WNT6_PLEJO</name>
<protein>
    <recommendedName>
        <fullName>Protein Wnt-6</fullName>
    </recommendedName>
</protein>
<proteinExistence type="inferred from homology"/>
<feature type="chain" id="PRO_0000200639" description="Protein Wnt-6">
    <location>
        <begin position="1" status="less than"/>
        <end position="117" status="greater than"/>
    </location>
</feature>
<feature type="lipid moiety-binding region" description="O-palmitoleoyl serine; by PORCN" evidence="3">
    <location>
        <position position="1"/>
    </location>
</feature>
<feature type="glycosylation site" description="N-linked (GlcNAc...) asparagine" evidence="4">
    <location>
        <position position="84"/>
    </location>
</feature>
<feature type="disulfide bond" evidence="2">
    <location>
        <begin position="83"/>
        <end position="98"/>
    </location>
</feature>
<feature type="non-terminal residue">
    <location>
        <position position="1"/>
    </location>
</feature>
<feature type="non-terminal residue">
    <location>
        <position position="117"/>
    </location>
</feature>